<reference key="1">
    <citation type="journal article" date="2001" name="Proc. Natl. Acad. Sci. U.S.A.">
        <title>Analysis of the chromosome sequence of the legume symbiont Sinorhizobium meliloti strain 1021.</title>
        <authorList>
            <person name="Capela D."/>
            <person name="Barloy-Hubler F."/>
            <person name="Gouzy J."/>
            <person name="Bothe G."/>
            <person name="Ampe F."/>
            <person name="Batut J."/>
            <person name="Boistard P."/>
            <person name="Becker A."/>
            <person name="Boutry M."/>
            <person name="Cadieu E."/>
            <person name="Dreano S."/>
            <person name="Gloux S."/>
            <person name="Godrie T."/>
            <person name="Goffeau A."/>
            <person name="Kahn D."/>
            <person name="Kiss E."/>
            <person name="Lelaure V."/>
            <person name="Masuy D."/>
            <person name="Pohl T."/>
            <person name="Portetelle D."/>
            <person name="Puehler A."/>
            <person name="Purnelle B."/>
            <person name="Ramsperger U."/>
            <person name="Renard C."/>
            <person name="Thebault P."/>
            <person name="Vandenbol M."/>
            <person name="Weidner S."/>
            <person name="Galibert F."/>
        </authorList>
    </citation>
    <scope>NUCLEOTIDE SEQUENCE [LARGE SCALE GENOMIC DNA]</scope>
    <source>
        <strain>1021</strain>
    </source>
</reference>
<reference key="2">
    <citation type="journal article" date="2001" name="Science">
        <title>The composite genome of the legume symbiont Sinorhizobium meliloti.</title>
        <authorList>
            <person name="Galibert F."/>
            <person name="Finan T.M."/>
            <person name="Long S.R."/>
            <person name="Puehler A."/>
            <person name="Abola P."/>
            <person name="Ampe F."/>
            <person name="Barloy-Hubler F."/>
            <person name="Barnett M.J."/>
            <person name="Becker A."/>
            <person name="Boistard P."/>
            <person name="Bothe G."/>
            <person name="Boutry M."/>
            <person name="Bowser L."/>
            <person name="Buhrmester J."/>
            <person name="Cadieu E."/>
            <person name="Capela D."/>
            <person name="Chain P."/>
            <person name="Cowie A."/>
            <person name="Davis R.W."/>
            <person name="Dreano S."/>
            <person name="Federspiel N.A."/>
            <person name="Fisher R.F."/>
            <person name="Gloux S."/>
            <person name="Godrie T."/>
            <person name="Goffeau A."/>
            <person name="Golding B."/>
            <person name="Gouzy J."/>
            <person name="Gurjal M."/>
            <person name="Hernandez-Lucas I."/>
            <person name="Hong A."/>
            <person name="Huizar L."/>
            <person name="Hyman R.W."/>
            <person name="Jones T."/>
            <person name="Kahn D."/>
            <person name="Kahn M.L."/>
            <person name="Kalman S."/>
            <person name="Keating D.H."/>
            <person name="Kiss E."/>
            <person name="Komp C."/>
            <person name="Lelaure V."/>
            <person name="Masuy D."/>
            <person name="Palm C."/>
            <person name="Peck M.C."/>
            <person name="Pohl T.M."/>
            <person name="Portetelle D."/>
            <person name="Purnelle B."/>
            <person name="Ramsperger U."/>
            <person name="Surzycki R."/>
            <person name="Thebault P."/>
            <person name="Vandenbol M."/>
            <person name="Vorhoelter F.J."/>
            <person name="Weidner S."/>
            <person name="Wells D.H."/>
            <person name="Wong K."/>
            <person name="Yeh K.-C."/>
            <person name="Batut J."/>
        </authorList>
    </citation>
    <scope>NUCLEOTIDE SEQUENCE [LARGE SCALE GENOMIC DNA]</scope>
    <source>
        <strain>1021</strain>
    </source>
</reference>
<comment type="function">
    <text evidence="1">Promotes RNA polymerase assembly. Latches the N- and C-terminal regions of the beta' subunit thereby facilitating its interaction with the beta and alpha subunits.</text>
</comment>
<comment type="catalytic activity">
    <reaction evidence="1">
        <text>RNA(n) + a ribonucleoside 5'-triphosphate = RNA(n+1) + diphosphate</text>
        <dbReference type="Rhea" id="RHEA:21248"/>
        <dbReference type="Rhea" id="RHEA-COMP:14527"/>
        <dbReference type="Rhea" id="RHEA-COMP:17342"/>
        <dbReference type="ChEBI" id="CHEBI:33019"/>
        <dbReference type="ChEBI" id="CHEBI:61557"/>
        <dbReference type="ChEBI" id="CHEBI:140395"/>
        <dbReference type="EC" id="2.7.7.6"/>
    </reaction>
</comment>
<comment type="subunit">
    <text evidence="1">The RNAP catalytic core consists of 2 alpha, 1 beta, 1 beta' and 1 omega subunit. When a sigma factor is associated with the core the holoenzyme is formed, which can initiate transcription.</text>
</comment>
<comment type="similarity">
    <text evidence="1">Belongs to the RNA polymerase subunit omega family.</text>
</comment>
<name>RPOZ_RHIME</name>
<accession>Q92R52</accession>
<gene>
    <name evidence="1" type="primary">rpoZ</name>
    <name type="ordered locus">R01064</name>
    <name type="ORF">SMc02408</name>
</gene>
<evidence type="ECO:0000255" key="1">
    <source>
        <dbReference type="HAMAP-Rule" id="MF_00366"/>
    </source>
</evidence>
<keyword id="KW-0240">DNA-directed RNA polymerase</keyword>
<keyword id="KW-0548">Nucleotidyltransferase</keyword>
<keyword id="KW-1185">Reference proteome</keyword>
<keyword id="KW-0804">Transcription</keyword>
<keyword id="KW-0808">Transferase</keyword>
<dbReference type="EC" id="2.7.7.6" evidence="1"/>
<dbReference type="EMBL" id="AL591688">
    <property type="protein sequence ID" value="CAC45643.1"/>
    <property type="molecule type" value="Genomic_DNA"/>
</dbReference>
<dbReference type="RefSeq" id="NP_385170.1">
    <property type="nucleotide sequence ID" value="NC_003047.1"/>
</dbReference>
<dbReference type="RefSeq" id="WP_003527295.1">
    <property type="nucleotide sequence ID" value="NC_003047.1"/>
</dbReference>
<dbReference type="SMR" id="Q92R52"/>
<dbReference type="EnsemblBacteria" id="CAC45643">
    <property type="protein sequence ID" value="CAC45643"/>
    <property type="gene ID" value="SMc02408"/>
</dbReference>
<dbReference type="GeneID" id="89575388"/>
<dbReference type="KEGG" id="sme:SMc02408"/>
<dbReference type="PATRIC" id="fig|266834.11.peg.2470"/>
<dbReference type="eggNOG" id="COG1758">
    <property type="taxonomic scope" value="Bacteria"/>
</dbReference>
<dbReference type="HOGENOM" id="CLU_125406_2_0_5"/>
<dbReference type="OrthoDB" id="9796300at2"/>
<dbReference type="Proteomes" id="UP000001976">
    <property type="component" value="Chromosome"/>
</dbReference>
<dbReference type="GO" id="GO:0000428">
    <property type="term" value="C:DNA-directed RNA polymerase complex"/>
    <property type="evidence" value="ECO:0007669"/>
    <property type="project" value="UniProtKB-KW"/>
</dbReference>
<dbReference type="GO" id="GO:0003677">
    <property type="term" value="F:DNA binding"/>
    <property type="evidence" value="ECO:0007669"/>
    <property type="project" value="UniProtKB-UniRule"/>
</dbReference>
<dbReference type="GO" id="GO:0003899">
    <property type="term" value="F:DNA-directed RNA polymerase activity"/>
    <property type="evidence" value="ECO:0007669"/>
    <property type="project" value="UniProtKB-UniRule"/>
</dbReference>
<dbReference type="GO" id="GO:0006351">
    <property type="term" value="P:DNA-templated transcription"/>
    <property type="evidence" value="ECO:0007669"/>
    <property type="project" value="UniProtKB-UniRule"/>
</dbReference>
<dbReference type="Gene3D" id="3.90.940.10">
    <property type="match status" value="1"/>
</dbReference>
<dbReference type="HAMAP" id="MF_00366">
    <property type="entry name" value="RNApol_bact_RpoZ"/>
    <property type="match status" value="1"/>
</dbReference>
<dbReference type="InterPro" id="IPR003716">
    <property type="entry name" value="DNA-dir_RNA_pol_omega"/>
</dbReference>
<dbReference type="InterPro" id="IPR006110">
    <property type="entry name" value="Pol_omega/Rpo6/RPB6"/>
</dbReference>
<dbReference type="InterPro" id="IPR036161">
    <property type="entry name" value="RPB6/omega-like_sf"/>
</dbReference>
<dbReference type="NCBIfam" id="TIGR00690">
    <property type="entry name" value="rpoZ"/>
    <property type="match status" value="1"/>
</dbReference>
<dbReference type="PANTHER" id="PTHR34476">
    <property type="entry name" value="DNA-DIRECTED RNA POLYMERASE SUBUNIT OMEGA"/>
    <property type="match status" value="1"/>
</dbReference>
<dbReference type="PANTHER" id="PTHR34476:SF1">
    <property type="entry name" value="DNA-DIRECTED RNA POLYMERASE SUBUNIT OMEGA"/>
    <property type="match status" value="1"/>
</dbReference>
<dbReference type="Pfam" id="PF01192">
    <property type="entry name" value="RNA_pol_Rpb6"/>
    <property type="match status" value="1"/>
</dbReference>
<dbReference type="SMART" id="SM01409">
    <property type="entry name" value="RNA_pol_Rpb6"/>
    <property type="match status" value="1"/>
</dbReference>
<dbReference type="SUPFAM" id="SSF63562">
    <property type="entry name" value="RPB6/omega subunit-like"/>
    <property type="match status" value="1"/>
</dbReference>
<protein>
    <recommendedName>
        <fullName evidence="1">DNA-directed RNA polymerase subunit omega</fullName>
        <shortName evidence="1">RNAP omega subunit</shortName>
        <ecNumber evidence="1">2.7.7.6</ecNumber>
    </recommendedName>
    <alternativeName>
        <fullName evidence="1">RNA polymerase omega subunit</fullName>
    </alternativeName>
    <alternativeName>
        <fullName evidence="1">Transcriptase subunit omega</fullName>
    </alternativeName>
</protein>
<feature type="chain" id="PRO_0000128968" description="DNA-directed RNA polymerase subunit omega">
    <location>
        <begin position="1"/>
        <end position="135"/>
    </location>
</feature>
<sequence>MARVTVEDCIDKVENRFELVLLASHRARLVSQGAPITVDRDNDKNPVVALREIADETLSPGDLKEDLIHSLQKHVEVDEPEPDPASLVQTEAAPAFAEAAEEEDQPEALTFDRMSEEELLAGIEGLVPPEKSDDY</sequence>
<proteinExistence type="inferred from homology"/>
<organism>
    <name type="scientific">Rhizobium meliloti (strain 1021)</name>
    <name type="common">Ensifer meliloti</name>
    <name type="synonym">Sinorhizobium meliloti</name>
    <dbReference type="NCBI Taxonomy" id="266834"/>
    <lineage>
        <taxon>Bacteria</taxon>
        <taxon>Pseudomonadati</taxon>
        <taxon>Pseudomonadota</taxon>
        <taxon>Alphaproteobacteria</taxon>
        <taxon>Hyphomicrobiales</taxon>
        <taxon>Rhizobiaceae</taxon>
        <taxon>Sinorhizobium/Ensifer group</taxon>
        <taxon>Sinorhizobium</taxon>
    </lineage>
</organism>